<proteinExistence type="predicted"/>
<gene>
    <name type="ordered locus">SCO3923</name>
    <name type="ORF">SCQ11.06</name>
</gene>
<organism>
    <name type="scientific">Streptomyces coelicolor (strain ATCC BAA-471 / A3(2) / M145)</name>
    <dbReference type="NCBI Taxonomy" id="100226"/>
    <lineage>
        <taxon>Bacteria</taxon>
        <taxon>Bacillati</taxon>
        <taxon>Actinomycetota</taxon>
        <taxon>Actinomycetes</taxon>
        <taxon>Kitasatosporales</taxon>
        <taxon>Streptomycetaceae</taxon>
        <taxon>Streptomyces</taxon>
        <taxon>Streptomyces albidoflavus group</taxon>
    </lineage>
</organism>
<evidence type="ECO:0000255" key="1"/>
<evidence type="ECO:0000305" key="2"/>
<sequence length="105" mass="11538">MKAFRLDELEAERAANDGAYLQFLRERNMSVGLYALDAGTTDSQKPHAQDEVYFVVSGRAAITVGMETTQVARGSVVYVPAGVAHKFHHISEDLRVLVVFSPPES</sequence>
<reference key="1">
    <citation type="journal article" date="1996" name="J. Bacteriol.">
        <title>Cloning, purification, and properties of a phosphotyrosine protein phosphatase from Streptomyces coelicolor A3(2).</title>
        <authorList>
            <person name="Li Y."/>
            <person name="Strohl W.R."/>
        </authorList>
    </citation>
    <scope>NUCLEOTIDE SEQUENCE [GENOMIC DNA]</scope>
    <source>
        <strain>A3(2) / 1147</strain>
    </source>
</reference>
<reference key="2">
    <citation type="journal article" date="2002" name="Nature">
        <title>Complete genome sequence of the model actinomycete Streptomyces coelicolor A3(2).</title>
        <authorList>
            <person name="Bentley S.D."/>
            <person name="Chater K.F."/>
            <person name="Cerdeno-Tarraga A.-M."/>
            <person name="Challis G.L."/>
            <person name="Thomson N.R."/>
            <person name="James K.D."/>
            <person name="Harris D.E."/>
            <person name="Quail M.A."/>
            <person name="Kieser H."/>
            <person name="Harper D."/>
            <person name="Bateman A."/>
            <person name="Brown S."/>
            <person name="Chandra G."/>
            <person name="Chen C.W."/>
            <person name="Collins M."/>
            <person name="Cronin A."/>
            <person name="Fraser A."/>
            <person name="Goble A."/>
            <person name="Hidalgo J."/>
            <person name="Hornsby T."/>
            <person name="Howarth S."/>
            <person name="Huang C.-H."/>
            <person name="Kieser T."/>
            <person name="Larke L."/>
            <person name="Murphy L.D."/>
            <person name="Oliver K."/>
            <person name="O'Neil S."/>
            <person name="Rabbinowitsch E."/>
            <person name="Rajandream M.A."/>
            <person name="Rutherford K.M."/>
            <person name="Rutter S."/>
            <person name="Seeger K."/>
            <person name="Saunders D."/>
            <person name="Sharp S."/>
            <person name="Squares R."/>
            <person name="Squares S."/>
            <person name="Taylor K."/>
            <person name="Warren T."/>
            <person name="Wietzorrek A."/>
            <person name="Woodward J.R."/>
            <person name="Barrell B.G."/>
            <person name="Parkhill J."/>
            <person name="Hopwood D.A."/>
        </authorList>
    </citation>
    <scope>NUCLEOTIDE SEQUENCE [LARGE SCALE GENOMIC DNA]</scope>
    <source>
        <strain>ATCC BAA-471 / A3(2) / M145</strain>
    </source>
</reference>
<feature type="chain" id="PRO_0000205347" description="Uncharacterized protein SCO3923">
    <location>
        <begin position="1"/>
        <end position="105"/>
    </location>
</feature>
<feature type="domain" description="Cupin type-2" evidence="1">
    <location>
        <begin position="33"/>
        <end position="100"/>
    </location>
</feature>
<keyword id="KW-1185">Reference proteome</keyword>
<accession>Q53867</accession>
<accession>Q9S1M8</accession>
<protein>
    <recommendedName>
        <fullName>Uncharacterized protein SCO3923</fullName>
    </recommendedName>
</protein>
<dbReference type="EMBL" id="U37580">
    <property type="protein sequence ID" value="AAC43612.1"/>
    <property type="status" value="ALT_INIT"/>
    <property type="molecule type" value="Genomic_DNA"/>
</dbReference>
<dbReference type="EMBL" id="AL939118">
    <property type="protein sequence ID" value="CAB46961.1"/>
    <property type="molecule type" value="Genomic_DNA"/>
</dbReference>
<dbReference type="PIR" id="T37176">
    <property type="entry name" value="T37176"/>
</dbReference>
<dbReference type="RefSeq" id="NP_628108.1">
    <property type="nucleotide sequence ID" value="NC_003888.3"/>
</dbReference>
<dbReference type="RefSeq" id="WP_011029310.1">
    <property type="nucleotide sequence ID" value="NZ_VNID01000003.1"/>
</dbReference>
<dbReference type="SMR" id="Q53867"/>
<dbReference type="STRING" id="100226.gene:17761550"/>
<dbReference type="PaxDb" id="100226-SCO3923"/>
<dbReference type="KEGG" id="sco:SCO3923"/>
<dbReference type="PATRIC" id="fig|100226.15.peg.3997"/>
<dbReference type="eggNOG" id="COG0662">
    <property type="taxonomic scope" value="Bacteria"/>
</dbReference>
<dbReference type="HOGENOM" id="CLU_149791_1_1_11"/>
<dbReference type="InParanoid" id="Q53867"/>
<dbReference type="OrthoDB" id="5072724at2"/>
<dbReference type="PhylomeDB" id="Q53867"/>
<dbReference type="Proteomes" id="UP000001973">
    <property type="component" value="Chromosome"/>
</dbReference>
<dbReference type="Gene3D" id="2.60.120.10">
    <property type="entry name" value="Jelly Rolls"/>
    <property type="match status" value="1"/>
</dbReference>
<dbReference type="InterPro" id="IPR013096">
    <property type="entry name" value="Cupin_2"/>
</dbReference>
<dbReference type="InterPro" id="IPR052044">
    <property type="entry name" value="PKS_Associated_Protein"/>
</dbReference>
<dbReference type="InterPro" id="IPR014710">
    <property type="entry name" value="RmlC-like_jellyroll"/>
</dbReference>
<dbReference type="InterPro" id="IPR011051">
    <property type="entry name" value="RmlC_Cupin_sf"/>
</dbReference>
<dbReference type="PANTHER" id="PTHR36114">
    <property type="entry name" value="16.7 KDA PROTEIN IN WHIE LOCUS"/>
    <property type="match status" value="1"/>
</dbReference>
<dbReference type="PANTHER" id="PTHR36114:SF8">
    <property type="entry name" value="CUPIN TYPE-1 DOMAIN-CONTAINING PROTEIN"/>
    <property type="match status" value="1"/>
</dbReference>
<dbReference type="Pfam" id="PF07883">
    <property type="entry name" value="Cupin_2"/>
    <property type="match status" value="1"/>
</dbReference>
<dbReference type="SUPFAM" id="SSF51182">
    <property type="entry name" value="RmlC-like cupins"/>
    <property type="match status" value="1"/>
</dbReference>
<comment type="sequence caution" evidence="2">
    <conflict type="erroneous initiation">
        <sequence resource="EMBL-CDS" id="AAC43612"/>
    </conflict>
</comment>
<name>Y3923_STRCO</name>